<feature type="chain" id="PRO_1000130549" description="L-threonine 3-dehydrogenase">
    <location>
        <begin position="1"/>
        <end position="341"/>
    </location>
</feature>
<feature type="active site" description="Charge relay system" evidence="1">
    <location>
        <position position="40"/>
    </location>
</feature>
<feature type="active site" description="Charge relay system" evidence="1">
    <location>
        <position position="43"/>
    </location>
</feature>
<feature type="binding site" evidence="1">
    <location>
        <position position="38"/>
    </location>
    <ligand>
        <name>Zn(2+)</name>
        <dbReference type="ChEBI" id="CHEBI:29105"/>
        <label>1</label>
        <note>catalytic</note>
    </ligand>
</feature>
<feature type="binding site" evidence="1">
    <location>
        <position position="63"/>
    </location>
    <ligand>
        <name>Zn(2+)</name>
        <dbReference type="ChEBI" id="CHEBI:29105"/>
        <label>1</label>
        <note>catalytic</note>
    </ligand>
</feature>
<feature type="binding site" evidence="1">
    <location>
        <position position="64"/>
    </location>
    <ligand>
        <name>Zn(2+)</name>
        <dbReference type="ChEBI" id="CHEBI:29105"/>
        <label>1</label>
        <note>catalytic</note>
    </ligand>
</feature>
<feature type="binding site" evidence="1">
    <location>
        <position position="93"/>
    </location>
    <ligand>
        <name>Zn(2+)</name>
        <dbReference type="ChEBI" id="CHEBI:29105"/>
        <label>2</label>
    </ligand>
</feature>
<feature type="binding site" evidence="1">
    <location>
        <position position="96"/>
    </location>
    <ligand>
        <name>Zn(2+)</name>
        <dbReference type="ChEBI" id="CHEBI:29105"/>
        <label>2</label>
    </ligand>
</feature>
<feature type="binding site" evidence="1">
    <location>
        <position position="99"/>
    </location>
    <ligand>
        <name>Zn(2+)</name>
        <dbReference type="ChEBI" id="CHEBI:29105"/>
        <label>2</label>
    </ligand>
</feature>
<feature type="binding site" evidence="1">
    <location>
        <position position="107"/>
    </location>
    <ligand>
        <name>Zn(2+)</name>
        <dbReference type="ChEBI" id="CHEBI:29105"/>
        <label>2</label>
    </ligand>
</feature>
<feature type="binding site" evidence="1">
    <location>
        <position position="175"/>
    </location>
    <ligand>
        <name>NAD(+)</name>
        <dbReference type="ChEBI" id="CHEBI:57540"/>
    </ligand>
</feature>
<feature type="binding site" evidence="1">
    <location>
        <position position="195"/>
    </location>
    <ligand>
        <name>NAD(+)</name>
        <dbReference type="ChEBI" id="CHEBI:57540"/>
    </ligand>
</feature>
<feature type="binding site" evidence="1">
    <location>
        <position position="200"/>
    </location>
    <ligand>
        <name>NAD(+)</name>
        <dbReference type="ChEBI" id="CHEBI:57540"/>
    </ligand>
</feature>
<feature type="binding site" evidence="1">
    <location>
        <begin position="262"/>
        <end position="264"/>
    </location>
    <ligand>
        <name>NAD(+)</name>
        <dbReference type="ChEBI" id="CHEBI:57540"/>
    </ligand>
</feature>
<feature type="binding site" evidence="1">
    <location>
        <begin position="286"/>
        <end position="287"/>
    </location>
    <ligand>
        <name>NAD(+)</name>
        <dbReference type="ChEBI" id="CHEBI:57540"/>
    </ligand>
</feature>
<feature type="site" description="Important for catalytic activity for the proton relay mechanism but does not participate directly in the coordination of zinc atom" evidence="1">
    <location>
        <position position="148"/>
    </location>
</feature>
<sequence length="341" mass="37241">MKALSKLKAEEGIWMTDVPVPELGHNDLLIKIRKTAICGTDVHIYNWDEWSQKTIPVPMVVGHEYVGEVVGIGQEVKGFKIGDRVSGEGHITCGHCRNCRGGRTHLCRNTIGVGVNRPGCFAEYLVIPAFNAFKIPDNISDDLASIFDPFGNAVHTALSFDLVGEDVLVSGAGPIGIMAAAVAKHVGARNVVITDVNEYRLELARKMGVTRAVNVAKENLNDVMAELGMTEGFDVGLEMSGAPPAFRTMLDTMNHGGRIAMLGIPPSDMSIDWTKVIFKGLFIKGIYGREMFETWYKMAALIQSGLDLSPIITHRFSIDDFQKGFDAMRSGQSGKVILSWD</sequence>
<comment type="function">
    <text evidence="1">Catalyzes the NAD(+)-dependent oxidation of L-threonine to 2-amino-3-ketobutyrate.</text>
</comment>
<comment type="catalytic activity">
    <reaction evidence="1">
        <text>L-threonine + NAD(+) = (2S)-2-amino-3-oxobutanoate + NADH + H(+)</text>
        <dbReference type="Rhea" id="RHEA:13161"/>
        <dbReference type="ChEBI" id="CHEBI:15378"/>
        <dbReference type="ChEBI" id="CHEBI:57540"/>
        <dbReference type="ChEBI" id="CHEBI:57926"/>
        <dbReference type="ChEBI" id="CHEBI:57945"/>
        <dbReference type="ChEBI" id="CHEBI:78948"/>
        <dbReference type="EC" id="1.1.1.103"/>
    </reaction>
</comment>
<comment type="cofactor">
    <cofactor evidence="1">
        <name>Zn(2+)</name>
        <dbReference type="ChEBI" id="CHEBI:29105"/>
    </cofactor>
    <text evidence="1">Binds 2 Zn(2+) ions per subunit.</text>
</comment>
<comment type="pathway">
    <text evidence="1">Amino-acid degradation; L-threonine degradation via oxydo-reductase pathway; glycine from L-threonine: step 1/2.</text>
</comment>
<comment type="subunit">
    <text evidence="1">Homotetramer.</text>
</comment>
<comment type="subcellular location">
    <subcellularLocation>
        <location evidence="1">Cytoplasm</location>
    </subcellularLocation>
</comment>
<comment type="similarity">
    <text evidence="1">Belongs to the zinc-containing alcohol dehydrogenase family.</text>
</comment>
<accession>B7NES3</accession>
<keyword id="KW-0963">Cytoplasm</keyword>
<keyword id="KW-0479">Metal-binding</keyword>
<keyword id="KW-0520">NAD</keyword>
<keyword id="KW-0560">Oxidoreductase</keyword>
<keyword id="KW-0862">Zinc</keyword>
<reference key="1">
    <citation type="journal article" date="2009" name="PLoS Genet.">
        <title>Organised genome dynamics in the Escherichia coli species results in highly diverse adaptive paths.</title>
        <authorList>
            <person name="Touchon M."/>
            <person name="Hoede C."/>
            <person name="Tenaillon O."/>
            <person name="Barbe V."/>
            <person name="Baeriswyl S."/>
            <person name="Bidet P."/>
            <person name="Bingen E."/>
            <person name="Bonacorsi S."/>
            <person name="Bouchier C."/>
            <person name="Bouvet O."/>
            <person name="Calteau A."/>
            <person name="Chiapello H."/>
            <person name="Clermont O."/>
            <person name="Cruveiller S."/>
            <person name="Danchin A."/>
            <person name="Diard M."/>
            <person name="Dossat C."/>
            <person name="Karoui M.E."/>
            <person name="Frapy E."/>
            <person name="Garry L."/>
            <person name="Ghigo J.M."/>
            <person name="Gilles A.M."/>
            <person name="Johnson J."/>
            <person name="Le Bouguenec C."/>
            <person name="Lescat M."/>
            <person name="Mangenot S."/>
            <person name="Martinez-Jehanne V."/>
            <person name="Matic I."/>
            <person name="Nassif X."/>
            <person name="Oztas S."/>
            <person name="Petit M.A."/>
            <person name="Pichon C."/>
            <person name="Rouy Z."/>
            <person name="Ruf C.S."/>
            <person name="Schneider D."/>
            <person name="Tourret J."/>
            <person name="Vacherie B."/>
            <person name="Vallenet D."/>
            <person name="Medigue C."/>
            <person name="Rocha E.P.C."/>
            <person name="Denamur E."/>
        </authorList>
    </citation>
    <scope>NUCLEOTIDE SEQUENCE [LARGE SCALE GENOMIC DNA]</scope>
    <source>
        <strain>UMN026 / ExPEC</strain>
    </source>
</reference>
<gene>
    <name evidence="1" type="primary">tdh</name>
    <name type="ordered locus">ECUMN_4133</name>
</gene>
<evidence type="ECO:0000255" key="1">
    <source>
        <dbReference type="HAMAP-Rule" id="MF_00627"/>
    </source>
</evidence>
<name>TDH_ECOLU</name>
<dbReference type="EC" id="1.1.1.103" evidence="1"/>
<dbReference type="EMBL" id="CU928163">
    <property type="protein sequence ID" value="CAR15274.1"/>
    <property type="molecule type" value="Genomic_DNA"/>
</dbReference>
<dbReference type="RefSeq" id="WP_000646019.1">
    <property type="nucleotide sequence ID" value="NC_011751.1"/>
</dbReference>
<dbReference type="RefSeq" id="YP_002414772.1">
    <property type="nucleotide sequence ID" value="NC_011751.1"/>
</dbReference>
<dbReference type="SMR" id="B7NES3"/>
<dbReference type="STRING" id="585056.ECUMN_4133"/>
<dbReference type="KEGG" id="eum:ECUMN_4133"/>
<dbReference type="PATRIC" id="fig|585056.7.peg.4308"/>
<dbReference type="HOGENOM" id="CLU_026673_11_0_6"/>
<dbReference type="UniPathway" id="UPA00046">
    <property type="reaction ID" value="UER00505"/>
</dbReference>
<dbReference type="Proteomes" id="UP000007097">
    <property type="component" value="Chromosome"/>
</dbReference>
<dbReference type="GO" id="GO:0005737">
    <property type="term" value="C:cytoplasm"/>
    <property type="evidence" value="ECO:0007669"/>
    <property type="project" value="UniProtKB-SubCell"/>
</dbReference>
<dbReference type="GO" id="GO:0008743">
    <property type="term" value="F:L-threonine 3-dehydrogenase activity"/>
    <property type="evidence" value="ECO:0007669"/>
    <property type="project" value="UniProtKB-UniRule"/>
</dbReference>
<dbReference type="GO" id="GO:0008270">
    <property type="term" value="F:zinc ion binding"/>
    <property type="evidence" value="ECO:0007669"/>
    <property type="project" value="UniProtKB-UniRule"/>
</dbReference>
<dbReference type="GO" id="GO:0019518">
    <property type="term" value="P:L-threonine catabolic process to glycine"/>
    <property type="evidence" value="ECO:0007669"/>
    <property type="project" value="UniProtKB-UniPathway"/>
</dbReference>
<dbReference type="FunFam" id="3.40.50.720:FF:000059">
    <property type="entry name" value="L-threonine 3-dehydrogenase"/>
    <property type="match status" value="1"/>
</dbReference>
<dbReference type="Gene3D" id="3.90.180.10">
    <property type="entry name" value="Medium-chain alcohol dehydrogenases, catalytic domain"/>
    <property type="match status" value="1"/>
</dbReference>
<dbReference type="Gene3D" id="3.40.50.720">
    <property type="entry name" value="NAD(P)-binding Rossmann-like Domain"/>
    <property type="match status" value="1"/>
</dbReference>
<dbReference type="HAMAP" id="MF_00627">
    <property type="entry name" value="Thr_dehydrog"/>
    <property type="match status" value="1"/>
</dbReference>
<dbReference type="InterPro" id="IPR013149">
    <property type="entry name" value="ADH-like_C"/>
</dbReference>
<dbReference type="InterPro" id="IPR013154">
    <property type="entry name" value="ADH-like_N"/>
</dbReference>
<dbReference type="InterPro" id="IPR002328">
    <property type="entry name" value="ADH_Zn_CS"/>
</dbReference>
<dbReference type="InterPro" id="IPR011032">
    <property type="entry name" value="GroES-like_sf"/>
</dbReference>
<dbReference type="InterPro" id="IPR004627">
    <property type="entry name" value="L-Threonine_3-DHase"/>
</dbReference>
<dbReference type="InterPro" id="IPR036291">
    <property type="entry name" value="NAD(P)-bd_dom_sf"/>
</dbReference>
<dbReference type="InterPro" id="IPR020843">
    <property type="entry name" value="PKS_ER"/>
</dbReference>
<dbReference type="InterPro" id="IPR050129">
    <property type="entry name" value="Zn_alcohol_dh"/>
</dbReference>
<dbReference type="NCBIfam" id="NF003808">
    <property type="entry name" value="PRK05396.1"/>
    <property type="match status" value="1"/>
</dbReference>
<dbReference type="NCBIfam" id="TIGR00692">
    <property type="entry name" value="tdh"/>
    <property type="match status" value="1"/>
</dbReference>
<dbReference type="PANTHER" id="PTHR43401">
    <property type="entry name" value="L-THREONINE 3-DEHYDROGENASE"/>
    <property type="match status" value="1"/>
</dbReference>
<dbReference type="PANTHER" id="PTHR43401:SF2">
    <property type="entry name" value="L-THREONINE 3-DEHYDROGENASE"/>
    <property type="match status" value="1"/>
</dbReference>
<dbReference type="Pfam" id="PF08240">
    <property type="entry name" value="ADH_N"/>
    <property type="match status" value="1"/>
</dbReference>
<dbReference type="Pfam" id="PF00107">
    <property type="entry name" value="ADH_zinc_N"/>
    <property type="match status" value="1"/>
</dbReference>
<dbReference type="SMART" id="SM00829">
    <property type="entry name" value="PKS_ER"/>
    <property type="match status" value="1"/>
</dbReference>
<dbReference type="SUPFAM" id="SSF50129">
    <property type="entry name" value="GroES-like"/>
    <property type="match status" value="1"/>
</dbReference>
<dbReference type="SUPFAM" id="SSF51735">
    <property type="entry name" value="NAD(P)-binding Rossmann-fold domains"/>
    <property type="match status" value="1"/>
</dbReference>
<dbReference type="PROSITE" id="PS00059">
    <property type="entry name" value="ADH_ZINC"/>
    <property type="match status" value="1"/>
</dbReference>
<organism>
    <name type="scientific">Escherichia coli O17:K52:H18 (strain UMN026 / ExPEC)</name>
    <dbReference type="NCBI Taxonomy" id="585056"/>
    <lineage>
        <taxon>Bacteria</taxon>
        <taxon>Pseudomonadati</taxon>
        <taxon>Pseudomonadota</taxon>
        <taxon>Gammaproteobacteria</taxon>
        <taxon>Enterobacterales</taxon>
        <taxon>Enterobacteriaceae</taxon>
        <taxon>Escherichia</taxon>
    </lineage>
</organism>
<proteinExistence type="inferred from homology"/>
<protein>
    <recommendedName>
        <fullName evidence="1">L-threonine 3-dehydrogenase</fullName>
        <shortName evidence="1">TDH</shortName>
        <ecNumber evidence="1">1.1.1.103</ecNumber>
    </recommendedName>
</protein>